<name>IDI_SALPC</name>
<gene>
    <name evidence="1" type="primary">idi</name>
    <name type="ordered locus">SPC_3098</name>
</gene>
<comment type="function">
    <text evidence="1">Catalyzes the 1,3-allylic rearrangement of the homoallylic substrate isopentenyl (IPP) to its highly electrophilic allylic isomer, dimethylallyl diphosphate (DMAPP).</text>
</comment>
<comment type="catalytic activity">
    <reaction evidence="1">
        <text>isopentenyl diphosphate = dimethylallyl diphosphate</text>
        <dbReference type="Rhea" id="RHEA:23284"/>
        <dbReference type="ChEBI" id="CHEBI:57623"/>
        <dbReference type="ChEBI" id="CHEBI:128769"/>
        <dbReference type="EC" id="5.3.3.2"/>
    </reaction>
</comment>
<comment type="cofactor">
    <cofactor evidence="1">
        <name>Mg(2+)</name>
        <dbReference type="ChEBI" id="CHEBI:18420"/>
    </cofactor>
    <text evidence="1">Binds 1 Mg(2+) ion per subunit. The magnesium ion binds only when substrate is bound.</text>
</comment>
<comment type="cofactor">
    <cofactor evidence="1">
        <name>Mn(2+)</name>
        <dbReference type="ChEBI" id="CHEBI:29035"/>
    </cofactor>
    <text evidence="1">Binds 1 Mn(2+) ion per subunit.</text>
</comment>
<comment type="pathway">
    <text evidence="1">Isoprenoid biosynthesis; dimethylallyl diphosphate biosynthesis; dimethylallyl diphosphate from isopentenyl diphosphate: step 1/1.</text>
</comment>
<comment type="subunit">
    <text evidence="1">Homodimer.</text>
</comment>
<comment type="subcellular location">
    <subcellularLocation>
        <location evidence="1">Cytoplasm</location>
    </subcellularLocation>
</comment>
<comment type="similarity">
    <text evidence="1">Belongs to the IPP isomerase type 1 family.</text>
</comment>
<evidence type="ECO:0000255" key="1">
    <source>
        <dbReference type="HAMAP-Rule" id="MF_00202"/>
    </source>
</evidence>
<dbReference type="EC" id="5.3.3.2" evidence="1"/>
<dbReference type="EMBL" id="CP000857">
    <property type="protein sequence ID" value="ACN47185.1"/>
    <property type="molecule type" value="Genomic_DNA"/>
</dbReference>
<dbReference type="RefSeq" id="WP_000133994.1">
    <property type="nucleotide sequence ID" value="NC_012125.1"/>
</dbReference>
<dbReference type="SMR" id="C0PY11"/>
<dbReference type="KEGG" id="sei:SPC_3098"/>
<dbReference type="HOGENOM" id="CLU_060552_2_0_6"/>
<dbReference type="UniPathway" id="UPA00059">
    <property type="reaction ID" value="UER00104"/>
</dbReference>
<dbReference type="Proteomes" id="UP000001599">
    <property type="component" value="Chromosome"/>
</dbReference>
<dbReference type="GO" id="GO:0005737">
    <property type="term" value="C:cytoplasm"/>
    <property type="evidence" value="ECO:0007669"/>
    <property type="project" value="UniProtKB-SubCell"/>
</dbReference>
<dbReference type="GO" id="GO:0004452">
    <property type="term" value="F:isopentenyl-diphosphate delta-isomerase activity"/>
    <property type="evidence" value="ECO:0007669"/>
    <property type="project" value="UniProtKB-UniRule"/>
</dbReference>
<dbReference type="GO" id="GO:0046872">
    <property type="term" value="F:metal ion binding"/>
    <property type="evidence" value="ECO:0007669"/>
    <property type="project" value="UniProtKB-KW"/>
</dbReference>
<dbReference type="GO" id="GO:0050992">
    <property type="term" value="P:dimethylallyl diphosphate biosynthetic process"/>
    <property type="evidence" value="ECO:0007669"/>
    <property type="project" value="UniProtKB-UniRule"/>
</dbReference>
<dbReference type="GO" id="GO:0008299">
    <property type="term" value="P:isoprenoid biosynthetic process"/>
    <property type="evidence" value="ECO:0007669"/>
    <property type="project" value="UniProtKB-KW"/>
</dbReference>
<dbReference type="CDD" id="cd02885">
    <property type="entry name" value="NUDIX_IPP_Isomerase"/>
    <property type="match status" value="1"/>
</dbReference>
<dbReference type="FunFam" id="3.90.79.10:FF:000009">
    <property type="entry name" value="Isopentenyl-diphosphate Delta-isomerase"/>
    <property type="match status" value="1"/>
</dbReference>
<dbReference type="Gene3D" id="3.90.79.10">
    <property type="entry name" value="Nucleoside Triphosphate Pyrophosphohydrolase"/>
    <property type="match status" value="1"/>
</dbReference>
<dbReference type="HAMAP" id="MF_00202">
    <property type="entry name" value="Idi"/>
    <property type="match status" value="1"/>
</dbReference>
<dbReference type="InterPro" id="IPR056375">
    <property type="entry name" value="Idi_bact"/>
</dbReference>
<dbReference type="InterPro" id="IPR011876">
    <property type="entry name" value="IsopentenylPP_isomerase_typ1"/>
</dbReference>
<dbReference type="InterPro" id="IPR015797">
    <property type="entry name" value="NUDIX_hydrolase-like_dom_sf"/>
</dbReference>
<dbReference type="InterPro" id="IPR000086">
    <property type="entry name" value="NUDIX_hydrolase_dom"/>
</dbReference>
<dbReference type="NCBIfam" id="TIGR02150">
    <property type="entry name" value="IPP_isom_1"/>
    <property type="match status" value="1"/>
</dbReference>
<dbReference type="NCBIfam" id="NF002995">
    <property type="entry name" value="PRK03759.1"/>
    <property type="match status" value="1"/>
</dbReference>
<dbReference type="PANTHER" id="PTHR10885">
    <property type="entry name" value="ISOPENTENYL-DIPHOSPHATE DELTA-ISOMERASE"/>
    <property type="match status" value="1"/>
</dbReference>
<dbReference type="PANTHER" id="PTHR10885:SF0">
    <property type="entry name" value="ISOPENTENYL-DIPHOSPHATE DELTA-ISOMERASE"/>
    <property type="match status" value="1"/>
</dbReference>
<dbReference type="Pfam" id="PF00293">
    <property type="entry name" value="NUDIX"/>
    <property type="match status" value="1"/>
</dbReference>
<dbReference type="PIRSF" id="PIRSF018427">
    <property type="entry name" value="Isopntndiph_ism"/>
    <property type="match status" value="1"/>
</dbReference>
<dbReference type="SUPFAM" id="SSF55811">
    <property type="entry name" value="Nudix"/>
    <property type="match status" value="1"/>
</dbReference>
<dbReference type="PROSITE" id="PS51462">
    <property type="entry name" value="NUDIX"/>
    <property type="match status" value="1"/>
</dbReference>
<reference key="1">
    <citation type="journal article" date="2009" name="PLoS ONE">
        <title>Salmonella paratyphi C: genetic divergence from Salmonella choleraesuis and pathogenic convergence with Salmonella typhi.</title>
        <authorList>
            <person name="Liu W.-Q."/>
            <person name="Feng Y."/>
            <person name="Wang Y."/>
            <person name="Zou Q.-H."/>
            <person name="Chen F."/>
            <person name="Guo J.-T."/>
            <person name="Peng Y.-H."/>
            <person name="Jin Y."/>
            <person name="Li Y.-G."/>
            <person name="Hu S.-N."/>
            <person name="Johnston R.N."/>
            <person name="Liu G.-R."/>
            <person name="Liu S.-L."/>
        </authorList>
    </citation>
    <scope>NUCLEOTIDE SEQUENCE [LARGE SCALE GENOMIC DNA]</scope>
    <source>
        <strain>RKS4594</strain>
    </source>
</reference>
<organism>
    <name type="scientific">Salmonella paratyphi C (strain RKS4594)</name>
    <dbReference type="NCBI Taxonomy" id="476213"/>
    <lineage>
        <taxon>Bacteria</taxon>
        <taxon>Pseudomonadati</taxon>
        <taxon>Pseudomonadota</taxon>
        <taxon>Gammaproteobacteria</taxon>
        <taxon>Enterobacterales</taxon>
        <taxon>Enterobacteriaceae</taxon>
        <taxon>Salmonella</taxon>
    </lineage>
</organism>
<accession>C0PY11</accession>
<protein>
    <recommendedName>
        <fullName evidence="1">Isopentenyl-diphosphate Delta-isomerase</fullName>
        <shortName evidence="1">IPP isomerase</shortName>
        <ecNumber evidence="1">5.3.3.2</ecNumber>
    </recommendedName>
    <alternativeName>
        <fullName evidence="1">IPP:DMAPP isomerase</fullName>
    </alternativeName>
    <alternativeName>
        <fullName evidence="1">Isopentenyl pyrophosphate isomerase</fullName>
    </alternativeName>
</protein>
<sequence length="181" mass="20781">MTEEHVVLLDEQDKPSGTLEKYAAHTLNTPLHLAFSCWLFNEDGQLLVTRRSLSKKAWPGVWTNSVCGHPQQGETTEEAIIRRCRFELGVEITDLTPVYPHFSYRATDPNGIVENEVCPVFAARATSVLQVNSEEVMDYQWSEFKSVWKSLLATPWAFSPWMVMQASDEQARERLLNYCQR</sequence>
<feature type="chain" id="PRO_1000124559" description="Isopentenyl-diphosphate Delta-isomerase">
    <location>
        <begin position="1"/>
        <end position="181"/>
    </location>
</feature>
<feature type="domain" description="Nudix hydrolase">
    <location>
        <begin position="30"/>
        <end position="164"/>
    </location>
</feature>
<feature type="active site" evidence="1">
    <location>
        <position position="67"/>
    </location>
</feature>
<feature type="active site" evidence="1">
    <location>
        <position position="116"/>
    </location>
</feature>
<feature type="binding site" evidence="1">
    <location>
        <position position="25"/>
    </location>
    <ligand>
        <name>Mn(2+)</name>
        <dbReference type="ChEBI" id="CHEBI:29035"/>
    </ligand>
</feature>
<feature type="binding site" evidence="1">
    <location>
        <position position="32"/>
    </location>
    <ligand>
        <name>Mn(2+)</name>
        <dbReference type="ChEBI" id="CHEBI:29035"/>
    </ligand>
</feature>
<feature type="binding site" evidence="1">
    <location>
        <position position="69"/>
    </location>
    <ligand>
        <name>Mn(2+)</name>
        <dbReference type="ChEBI" id="CHEBI:29035"/>
    </ligand>
</feature>
<feature type="binding site" evidence="1">
    <location>
        <position position="87"/>
    </location>
    <ligand>
        <name>Mg(2+)</name>
        <dbReference type="ChEBI" id="CHEBI:18420"/>
    </ligand>
</feature>
<feature type="binding site" evidence="1">
    <location>
        <position position="114"/>
    </location>
    <ligand>
        <name>Mn(2+)</name>
        <dbReference type="ChEBI" id="CHEBI:29035"/>
    </ligand>
</feature>
<feature type="binding site" evidence="1">
    <location>
        <position position="116"/>
    </location>
    <ligand>
        <name>Mn(2+)</name>
        <dbReference type="ChEBI" id="CHEBI:29035"/>
    </ligand>
</feature>
<keyword id="KW-0963">Cytoplasm</keyword>
<keyword id="KW-0413">Isomerase</keyword>
<keyword id="KW-0414">Isoprene biosynthesis</keyword>
<keyword id="KW-0460">Magnesium</keyword>
<keyword id="KW-0464">Manganese</keyword>
<keyword id="KW-0479">Metal-binding</keyword>
<proteinExistence type="inferred from homology"/>